<gene>
    <name evidence="6" type="primary">PLEKHM3</name>
    <name evidence="1" type="synonym">DAPR</name>
    <name type="synonym">PLEKHM1L</name>
</gene>
<name>PKHM3_HUMAN</name>
<sequence>MEALEVDDISPALEVTEEFFSTLDSNLEKAVQQAEVYGIQEVPELVGHEVLSNITDNGAMRNVTSLGKGGMIWDHCKSRLLETKAQNVFPAKEQFMVQRGTTPDNLSWMEQKEASTFNFFNICQRRRDRPRSVNDLLDETSTFKPGHARSRSDITQVDWRVVLKTTPLQQQQQQQPLLQGPHVTRPSFLLPSPNKIEDAQGNTEHKQTFPNILKKGYLEIRKDHDSYWQSCYAELSPYNLYFYSLDSSGNQNLYATYQLSHFQSISVLGNLEARMVDTVLYDNTQLQLKAESPWEALDWGQKLWEVVHAAVPGYMGRQNELTISPGLGHHDDYTQNHSFQKKTSGLLPPSPVLDSSKQYQNILKSGTLYRLTVQNNWKAFTFVLSRAYLMAFQPGKLDEDPLLSYNVDVCLAVQMDNLDGCDSCFQVIFPQDVLRLRAETRQRAQEWMEALKIAANVARSSEQNLQVTLRNKPKDQMGGHELRKNKRQSVTTSFLSILTTLSLERGLTAQSFKCAGCQRSIGLSNGKAKVCNYSGWYYCSSCHVDDSFLIPARIVHNWDTSKYKVSKQAKEFLEYVYEEPLIDIQQENAMLYHHAEPLAAVLRLRQRLKSLRAYLFSCRAAVAEDLRRRIFPREYLLQQIHLYSLADLQQVIEGKLAPFLGKVIKFATSHVYSCSLCSQKGFICEICNNGEILYPFEDISTSRCESCGAVFHSECKEKSVPCPRCVRRELQKKQKSFWQRLNMDESLEEACTMFELSYQNT</sequence>
<evidence type="ECO:0000250" key="1">
    <source>
        <dbReference type="UniProtKB" id="Q8BM47"/>
    </source>
</evidence>
<evidence type="ECO:0000255" key="2">
    <source>
        <dbReference type="PROSITE-ProRule" id="PRU00145"/>
    </source>
</evidence>
<evidence type="ECO:0000303" key="3">
    <source>
    </source>
</evidence>
<evidence type="ECO:0000303" key="4">
    <source>
    </source>
</evidence>
<evidence type="ECO:0000305" key="5"/>
<evidence type="ECO:0000312" key="6">
    <source>
        <dbReference type="HGNC" id="HGNC:34006"/>
    </source>
</evidence>
<reference key="1">
    <citation type="journal article" date="2005" name="Nature">
        <title>Generation and annotation of the DNA sequences of human chromosomes 2 and 4.</title>
        <authorList>
            <person name="Hillier L.W."/>
            <person name="Graves T.A."/>
            <person name="Fulton R.S."/>
            <person name="Fulton L.A."/>
            <person name="Pepin K.H."/>
            <person name="Minx P."/>
            <person name="Wagner-McPherson C."/>
            <person name="Layman D."/>
            <person name="Wylie K."/>
            <person name="Sekhon M."/>
            <person name="Becker M.C."/>
            <person name="Fewell G.A."/>
            <person name="Delehaunty K.D."/>
            <person name="Miner T.L."/>
            <person name="Nash W.E."/>
            <person name="Kremitzki C."/>
            <person name="Oddy L."/>
            <person name="Du H."/>
            <person name="Sun H."/>
            <person name="Bradshaw-Cordum H."/>
            <person name="Ali J."/>
            <person name="Carter J."/>
            <person name="Cordes M."/>
            <person name="Harris A."/>
            <person name="Isak A."/>
            <person name="van Brunt A."/>
            <person name="Nguyen C."/>
            <person name="Du F."/>
            <person name="Courtney L."/>
            <person name="Kalicki J."/>
            <person name="Ozersky P."/>
            <person name="Abbott S."/>
            <person name="Armstrong J."/>
            <person name="Belter E.A."/>
            <person name="Caruso L."/>
            <person name="Cedroni M."/>
            <person name="Cotton M."/>
            <person name="Davidson T."/>
            <person name="Desai A."/>
            <person name="Elliott G."/>
            <person name="Erb T."/>
            <person name="Fronick C."/>
            <person name="Gaige T."/>
            <person name="Haakenson W."/>
            <person name="Haglund K."/>
            <person name="Holmes A."/>
            <person name="Harkins R."/>
            <person name="Kim K."/>
            <person name="Kruchowski S.S."/>
            <person name="Strong C.M."/>
            <person name="Grewal N."/>
            <person name="Goyea E."/>
            <person name="Hou S."/>
            <person name="Levy A."/>
            <person name="Martinka S."/>
            <person name="Mead K."/>
            <person name="McLellan M.D."/>
            <person name="Meyer R."/>
            <person name="Randall-Maher J."/>
            <person name="Tomlinson C."/>
            <person name="Dauphin-Kohlberg S."/>
            <person name="Kozlowicz-Reilly A."/>
            <person name="Shah N."/>
            <person name="Swearengen-Shahid S."/>
            <person name="Snider J."/>
            <person name="Strong J.T."/>
            <person name="Thompson J."/>
            <person name="Yoakum M."/>
            <person name="Leonard S."/>
            <person name="Pearman C."/>
            <person name="Trani L."/>
            <person name="Radionenko M."/>
            <person name="Waligorski J.E."/>
            <person name="Wang C."/>
            <person name="Rock S.M."/>
            <person name="Tin-Wollam A.-M."/>
            <person name="Maupin R."/>
            <person name="Latreille P."/>
            <person name="Wendl M.C."/>
            <person name="Yang S.-P."/>
            <person name="Pohl C."/>
            <person name="Wallis J.W."/>
            <person name="Spieth J."/>
            <person name="Bieri T.A."/>
            <person name="Berkowicz N."/>
            <person name="Nelson J.O."/>
            <person name="Osborne J."/>
            <person name="Ding L."/>
            <person name="Meyer R."/>
            <person name="Sabo A."/>
            <person name="Shotland Y."/>
            <person name="Sinha P."/>
            <person name="Wohldmann P.E."/>
            <person name="Cook L.L."/>
            <person name="Hickenbotham M.T."/>
            <person name="Eldred J."/>
            <person name="Williams D."/>
            <person name="Jones T.A."/>
            <person name="She X."/>
            <person name="Ciccarelli F.D."/>
            <person name="Izaurralde E."/>
            <person name="Taylor J."/>
            <person name="Schmutz J."/>
            <person name="Myers R.M."/>
            <person name="Cox D.R."/>
            <person name="Huang X."/>
            <person name="McPherson J.D."/>
            <person name="Mardis E.R."/>
            <person name="Clifton S.W."/>
            <person name="Warren W.C."/>
            <person name="Chinwalla A.T."/>
            <person name="Eddy S.R."/>
            <person name="Marra M.A."/>
            <person name="Ovcharenko I."/>
            <person name="Furey T.S."/>
            <person name="Miller W."/>
            <person name="Eichler E.E."/>
            <person name="Bork P."/>
            <person name="Suyama M."/>
            <person name="Torrents D."/>
            <person name="Waterston R.H."/>
            <person name="Wilson R.K."/>
        </authorList>
    </citation>
    <scope>NUCLEOTIDE SEQUENCE [LARGE SCALE GENOMIC DNA]</scope>
</reference>
<reference key="2">
    <citation type="journal article" date="2004" name="Genome Res.">
        <title>The status, quality, and expansion of the NIH full-length cDNA project: the Mammalian Gene Collection (MGC).</title>
        <authorList>
            <consortium name="The MGC Project Team"/>
        </authorList>
    </citation>
    <scope>NUCLEOTIDE SEQUENCE [LARGE SCALE MRNA] (ISOFORM 1)</scope>
    <scope>NUCLEOTIDE SEQUENCE [LARGE SCALE MRNA] OF 405-761 (ISOFORM 3)</scope>
    <source>
        <tissue>Prostate</tissue>
    </source>
</reference>
<reference key="3">
    <citation type="journal article" date="2004" name="Nat. Genet.">
        <title>Complete sequencing and characterization of 21,243 full-length human cDNAs.</title>
        <authorList>
            <person name="Ota T."/>
            <person name="Suzuki Y."/>
            <person name="Nishikawa T."/>
            <person name="Otsuki T."/>
            <person name="Sugiyama T."/>
            <person name="Irie R."/>
            <person name="Wakamatsu A."/>
            <person name="Hayashi K."/>
            <person name="Sato H."/>
            <person name="Nagai K."/>
            <person name="Kimura K."/>
            <person name="Makita H."/>
            <person name="Sekine M."/>
            <person name="Obayashi M."/>
            <person name="Nishi T."/>
            <person name="Shibahara T."/>
            <person name="Tanaka T."/>
            <person name="Ishii S."/>
            <person name="Yamamoto J."/>
            <person name="Saito K."/>
            <person name="Kawai Y."/>
            <person name="Isono Y."/>
            <person name="Nakamura Y."/>
            <person name="Nagahari K."/>
            <person name="Murakami K."/>
            <person name="Yasuda T."/>
            <person name="Iwayanagi T."/>
            <person name="Wagatsuma M."/>
            <person name="Shiratori A."/>
            <person name="Sudo H."/>
            <person name="Hosoiri T."/>
            <person name="Kaku Y."/>
            <person name="Kodaira H."/>
            <person name="Kondo H."/>
            <person name="Sugawara M."/>
            <person name="Takahashi M."/>
            <person name="Kanda K."/>
            <person name="Yokoi T."/>
            <person name="Furuya T."/>
            <person name="Kikkawa E."/>
            <person name="Omura Y."/>
            <person name="Abe K."/>
            <person name="Kamihara K."/>
            <person name="Katsuta N."/>
            <person name="Sato K."/>
            <person name="Tanikawa M."/>
            <person name="Yamazaki M."/>
            <person name="Ninomiya K."/>
            <person name="Ishibashi T."/>
            <person name="Yamashita H."/>
            <person name="Murakawa K."/>
            <person name="Fujimori K."/>
            <person name="Tanai H."/>
            <person name="Kimata M."/>
            <person name="Watanabe M."/>
            <person name="Hiraoka S."/>
            <person name="Chiba Y."/>
            <person name="Ishida S."/>
            <person name="Ono Y."/>
            <person name="Takiguchi S."/>
            <person name="Watanabe S."/>
            <person name="Yosida M."/>
            <person name="Hotuta T."/>
            <person name="Kusano J."/>
            <person name="Kanehori K."/>
            <person name="Takahashi-Fujii A."/>
            <person name="Hara H."/>
            <person name="Tanase T.-O."/>
            <person name="Nomura Y."/>
            <person name="Togiya S."/>
            <person name="Komai F."/>
            <person name="Hara R."/>
            <person name="Takeuchi K."/>
            <person name="Arita M."/>
            <person name="Imose N."/>
            <person name="Musashino K."/>
            <person name="Yuuki H."/>
            <person name="Oshima A."/>
            <person name="Sasaki N."/>
            <person name="Aotsuka S."/>
            <person name="Yoshikawa Y."/>
            <person name="Matsunawa H."/>
            <person name="Ichihara T."/>
            <person name="Shiohata N."/>
            <person name="Sano S."/>
            <person name="Moriya S."/>
            <person name="Momiyama H."/>
            <person name="Satoh N."/>
            <person name="Takami S."/>
            <person name="Terashima Y."/>
            <person name="Suzuki O."/>
            <person name="Nakagawa S."/>
            <person name="Senoh A."/>
            <person name="Mizoguchi H."/>
            <person name="Goto Y."/>
            <person name="Shimizu F."/>
            <person name="Wakebe H."/>
            <person name="Hishigaki H."/>
            <person name="Watanabe T."/>
            <person name="Sugiyama A."/>
            <person name="Takemoto M."/>
            <person name="Kawakami B."/>
            <person name="Yamazaki M."/>
            <person name="Watanabe K."/>
            <person name="Kumagai A."/>
            <person name="Itakura S."/>
            <person name="Fukuzumi Y."/>
            <person name="Fujimori Y."/>
            <person name="Komiyama M."/>
            <person name="Tashiro H."/>
            <person name="Tanigami A."/>
            <person name="Fujiwara T."/>
            <person name="Ono T."/>
            <person name="Yamada K."/>
            <person name="Fujii Y."/>
            <person name="Ozaki K."/>
            <person name="Hirao M."/>
            <person name="Ohmori Y."/>
            <person name="Kawabata A."/>
            <person name="Hikiji T."/>
            <person name="Kobatake N."/>
            <person name="Inagaki H."/>
            <person name="Ikema Y."/>
            <person name="Okamoto S."/>
            <person name="Okitani R."/>
            <person name="Kawakami T."/>
            <person name="Noguchi S."/>
            <person name="Itoh T."/>
            <person name="Shigeta K."/>
            <person name="Senba T."/>
            <person name="Matsumura K."/>
            <person name="Nakajima Y."/>
            <person name="Mizuno T."/>
            <person name="Morinaga M."/>
            <person name="Sasaki M."/>
            <person name="Togashi T."/>
            <person name="Oyama M."/>
            <person name="Hata H."/>
            <person name="Watanabe M."/>
            <person name="Komatsu T."/>
            <person name="Mizushima-Sugano J."/>
            <person name="Satoh T."/>
            <person name="Shirai Y."/>
            <person name="Takahashi Y."/>
            <person name="Nakagawa K."/>
            <person name="Okumura K."/>
            <person name="Nagase T."/>
            <person name="Nomura N."/>
            <person name="Kikuchi H."/>
            <person name="Masuho Y."/>
            <person name="Yamashita R."/>
            <person name="Nakai K."/>
            <person name="Yada T."/>
            <person name="Nakamura Y."/>
            <person name="Ohara O."/>
            <person name="Isogai T."/>
            <person name="Sugano S."/>
        </authorList>
    </citation>
    <scope>NUCLEOTIDE SEQUENCE [LARGE SCALE MRNA] OF 254-761 (ISOFORM 2)</scope>
    <source>
        <tissue>Brain cortex</tissue>
    </source>
</reference>
<accession>Q6ZWE6</accession>
<accession>B9EKV2</accession>
<accession>Q8WW68</accession>
<protein>
    <recommendedName>
        <fullName>Pleckstrin homology domain-containing family M member 3</fullName>
        <shortName>PH domain-containing family M member 3</shortName>
    </recommendedName>
    <alternativeName>
        <fullName evidence="1">Differentiation associated protein</fullName>
    </alternativeName>
</protein>
<proteinExistence type="evidence at protein level"/>
<organism>
    <name type="scientific">Homo sapiens</name>
    <name type="common">Human</name>
    <dbReference type="NCBI Taxonomy" id="9606"/>
    <lineage>
        <taxon>Eukaryota</taxon>
        <taxon>Metazoa</taxon>
        <taxon>Chordata</taxon>
        <taxon>Craniata</taxon>
        <taxon>Vertebrata</taxon>
        <taxon>Euteleostomi</taxon>
        <taxon>Mammalia</taxon>
        <taxon>Eutheria</taxon>
        <taxon>Euarchontoglires</taxon>
        <taxon>Primates</taxon>
        <taxon>Haplorrhini</taxon>
        <taxon>Catarrhini</taxon>
        <taxon>Hominidae</taxon>
        <taxon>Homo</taxon>
    </lineage>
</organism>
<keyword id="KW-0025">Alternative splicing</keyword>
<keyword id="KW-1003">Cell membrane</keyword>
<keyword id="KW-0963">Cytoplasm</keyword>
<keyword id="KW-0333">Golgi apparatus</keyword>
<keyword id="KW-0472">Membrane</keyword>
<keyword id="KW-0479">Metal-binding</keyword>
<keyword id="KW-0597">Phosphoprotein</keyword>
<keyword id="KW-1267">Proteomics identification</keyword>
<keyword id="KW-1185">Reference proteome</keyword>
<keyword id="KW-0677">Repeat</keyword>
<keyword id="KW-0862">Zinc</keyword>
<keyword id="KW-0863">Zinc-finger</keyword>
<dbReference type="EMBL" id="AC083900">
    <property type="status" value="NOT_ANNOTATED_CDS"/>
    <property type="molecule type" value="Genomic_DNA"/>
</dbReference>
<dbReference type="EMBL" id="AC096772">
    <property type="status" value="NOT_ANNOTATED_CDS"/>
    <property type="molecule type" value="Genomic_DNA"/>
</dbReference>
<dbReference type="EMBL" id="BC020812">
    <property type="protein sequence ID" value="AAH20812.1"/>
    <property type="molecule type" value="mRNA"/>
</dbReference>
<dbReference type="EMBL" id="BC151137">
    <property type="protein sequence ID" value="AAI51138.1"/>
    <property type="molecule type" value="mRNA"/>
</dbReference>
<dbReference type="EMBL" id="AK123204">
    <property type="protein sequence ID" value="BAC85557.1"/>
    <property type="status" value="ALT_INIT"/>
    <property type="molecule type" value="mRNA"/>
</dbReference>
<dbReference type="CCDS" id="CCDS42808.1">
    <molecule id="Q6ZWE6-1"/>
</dbReference>
<dbReference type="RefSeq" id="NP_001073944.1">
    <molecule id="Q6ZWE6-1"/>
    <property type="nucleotide sequence ID" value="NM_001080475.3"/>
</dbReference>
<dbReference type="RefSeq" id="XP_011509462.1">
    <molecule id="Q6ZWE6-1"/>
    <property type="nucleotide sequence ID" value="XM_011511160.3"/>
</dbReference>
<dbReference type="RefSeq" id="XP_054197941.1">
    <molecule id="Q6ZWE6-1"/>
    <property type="nucleotide sequence ID" value="XM_054341966.1"/>
</dbReference>
<dbReference type="SMR" id="Q6ZWE6"/>
<dbReference type="BioGRID" id="132958">
    <property type="interactions" value="56"/>
</dbReference>
<dbReference type="FunCoup" id="Q6ZWE6">
    <property type="interactions" value="1723"/>
</dbReference>
<dbReference type="IntAct" id="Q6ZWE6">
    <property type="interactions" value="20"/>
</dbReference>
<dbReference type="STRING" id="9606.ENSP00000417003"/>
<dbReference type="iPTMnet" id="Q6ZWE6"/>
<dbReference type="PhosphoSitePlus" id="Q6ZWE6"/>
<dbReference type="BioMuta" id="PLEKHM3"/>
<dbReference type="DMDM" id="172046173"/>
<dbReference type="jPOST" id="Q6ZWE6"/>
<dbReference type="MassIVE" id="Q6ZWE6"/>
<dbReference type="PaxDb" id="9606-ENSP00000417003"/>
<dbReference type="PeptideAtlas" id="Q6ZWE6"/>
<dbReference type="ProteomicsDB" id="68476">
    <molecule id="Q6ZWE6-1"/>
</dbReference>
<dbReference type="ProteomicsDB" id="68477">
    <molecule id="Q6ZWE6-2"/>
</dbReference>
<dbReference type="ProteomicsDB" id="68478">
    <molecule id="Q6ZWE6-3"/>
</dbReference>
<dbReference type="Antibodypedia" id="34191">
    <property type="antibodies" value="54 antibodies from 21 providers"/>
</dbReference>
<dbReference type="DNASU" id="389072"/>
<dbReference type="Ensembl" id="ENST00000427836.8">
    <molecule id="Q6ZWE6-1"/>
    <property type="protein sequence ID" value="ENSP00000417003.2"/>
    <property type="gene ID" value="ENSG00000178385.15"/>
</dbReference>
<dbReference type="GeneID" id="389072"/>
<dbReference type="KEGG" id="hsa:389072"/>
<dbReference type="MANE-Select" id="ENST00000427836.8">
    <property type="protein sequence ID" value="ENSP00000417003.2"/>
    <property type="RefSeq nucleotide sequence ID" value="NM_001080475.3"/>
    <property type="RefSeq protein sequence ID" value="NP_001073944.1"/>
</dbReference>
<dbReference type="UCSC" id="uc002vcl.3">
    <molecule id="Q6ZWE6-1"/>
    <property type="organism name" value="human"/>
</dbReference>
<dbReference type="AGR" id="HGNC:34006"/>
<dbReference type="CTD" id="389072"/>
<dbReference type="DisGeNET" id="389072"/>
<dbReference type="GeneCards" id="PLEKHM3"/>
<dbReference type="HGNC" id="HGNC:34006">
    <property type="gene designation" value="PLEKHM3"/>
</dbReference>
<dbReference type="HPA" id="ENSG00000178385">
    <property type="expression patterns" value="Low tissue specificity"/>
</dbReference>
<dbReference type="MIM" id="619186">
    <property type="type" value="gene"/>
</dbReference>
<dbReference type="neXtProt" id="NX_Q6ZWE6"/>
<dbReference type="OpenTargets" id="ENSG00000178385"/>
<dbReference type="PharmGKB" id="PA162399738"/>
<dbReference type="VEuPathDB" id="HostDB:ENSG00000178385"/>
<dbReference type="eggNOG" id="KOG1829">
    <property type="taxonomic scope" value="Eukaryota"/>
</dbReference>
<dbReference type="GeneTree" id="ENSGT00940000159743"/>
<dbReference type="HOGENOM" id="CLU_021585_0_0_1"/>
<dbReference type="InParanoid" id="Q6ZWE6"/>
<dbReference type="OMA" id="CVHRELH"/>
<dbReference type="OrthoDB" id="62364at2759"/>
<dbReference type="PAN-GO" id="Q6ZWE6">
    <property type="GO annotations" value="0 GO annotations based on evolutionary models"/>
</dbReference>
<dbReference type="PhylomeDB" id="Q6ZWE6"/>
<dbReference type="TreeFam" id="TF317067"/>
<dbReference type="PathwayCommons" id="Q6ZWE6"/>
<dbReference type="SignaLink" id="Q6ZWE6"/>
<dbReference type="BioGRID-ORCS" id="389072">
    <property type="hits" value="14 hits in 1149 CRISPR screens"/>
</dbReference>
<dbReference type="ChiTaRS" id="PLEKHM3">
    <property type="organism name" value="human"/>
</dbReference>
<dbReference type="GenomeRNAi" id="389072"/>
<dbReference type="Pharos" id="Q6ZWE6">
    <property type="development level" value="Tbio"/>
</dbReference>
<dbReference type="PRO" id="PR:Q6ZWE6"/>
<dbReference type="Proteomes" id="UP000005640">
    <property type="component" value="Chromosome 2"/>
</dbReference>
<dbReference type="RNAct" id="Q6ZWE6">
    <property type="molecule type" value="protein"/>
</dbReference>
<dbReference type="Bgee" id="ENSG00000178385">
    <property type="expression patterns" value="Expressed in superior frontal gyrus and 100 other cell types or tissues"/>
</dbReference>
<dbReference type="ExpressionAtlas" id="Q6ZWE6">
    <property type="expression patterns" value="baseline and differential"/>
</dbReference>
<dbReference type="GO" id="GO:0005737">
    <property type="term" value="C:cytoplasm"/>
    <property type="evidence" value="ECO:0000250"/>
    <property type="project" value="UniProtKB"/>
</dbReference>
<dbReference type="GO" id="GO:0005794">
    <property type="term" value="C:Golgi apparatus"/>
    <property type="evidence" value="ECO:0000250"/>
    <property type="project" value="UniProtKB"/>
</dbReference>
<dbReference type="GO" id="GO:0005886">
    <property type="term" value="C:plasma membrane"/>
    <property type="evidence" value="ECO:0007669"/>
    <property type="project" value="UniProtKB-SubCell"/>
</dbReference>
<dbReference type="GO" id="GO:0008270">
    <property type="term" value="F:zinc ion binding"/>
    <property type="evidence" value="ECO:0007669"/>
    <property type="project" value="UniProtKB-KW"/>
</dbReference>
<dbReference type="GO" id="GO:0045445">
    <property type="term" value="P:myoblast differentiation"/>
    <property type="evidence" value="ECO:0000250"/>
    <property type="project" value="UniProtKB"/>
</dbReference>
<dbReference type="CDD" id="cd14674">
    <property type="entry name" value="PH_PLEKHM3_1"/>
    <property type="match status" value="1"/>
</dbReference>
<dbReference type="CDD" id="cd13327">
    <property type="entry name" value="PH_PLEKHM3_2"/>
    <property type="match status" value="1"/>
</dbReference>
<dbReference type="FunFam" id="2.30.29.30:FF:000257">
    <property type="entry name" value="Pleckstrin homology domain-containing family M member 3"/>
    <property type="match status" value="1"/>
</dbReference>
<dbReference type="FunFam" id="2.30.29.30:FF:000271">
    <property type="entry name" value="pleckstrin homology domain-containing family M member 3"/>
    <property type="match status" value="1"/>
</dbReference>
<dbReference type="Gene3D" id="2.30.29.30">
    <property type="entry name" value="Pleckstrin-homology domain (PH domain)/Phosphotyrosine-binding domain (PTB)"/>
    <property type="match status" value="2"/>
</dbReference>
<dbReference type="InterPro" id="IPR051366">
    <property type="entry name" value="DEF8"/>
</dbReference>
<dbReference type="InterPro" id="IPR011993">
    <property type="entry name" value="PH-like_dom_sf"/>
</dbReference>
<dbReference type="InterPro" id="IPR001849">
    <property type="entry name" value="PH_domain"/>
</dbReference>
<dbReference type="InterPro" id="IPR037812">
    <property type="entry name" value="PLEKHM3_PH_1"/>
</dbReference>
<dbReference type="InterPro" id="IPR025258">
    <property type="entry name" value="RH_dom"/>
</dbReference>
<dbReference type="PANTHER" id="PTHR12326">
    <property type="entry name" value="PLECKSTRIN HOMOLOGY DOMAIN CONTAINING PROTEIN"/>
    <property type="match status" value="1"/>
</dbReference>
<dbReference type="PANTHER" id="PTHR12326:SF10">
    <property type="entry name" value="PLECKSTRIN HOMOLOGY DOMAIN-CONTAINING FAMILY M MEMBER 3"/>
    <property type="match status" value="1"/>
</dbReference>
<dbReference type="Pfam" id="PF00169">
    <property type="entry name" value="PH"/>
    <property type="match status" value="1"/>
</dbReference>
<dbReference type="Pfam" id="PF13901">
    <property type="entry name" value="RH_dom"/>
    <property type="match status" value="1"/>
</dbReference>
<dbReference type="SMART" id="SM01175">
    <property type="entry name" value="DUF4206"/>
    <property type="match status" value="1"/>
</dbReference>
<dbReference type="SMART" id="SM00233">
    <property type="entry name" value="PH"/>
    <property type="match status" value="2"/>
</dbReference>
<dbReference type="SUPFAM" id="SSF50729">
    <property type="entry name" value="PH domain-like"/>
    <property type="match status" value="2"/>
</dbReference>
<dbReference type="PROSITE" id="PS50003">
    <property type="entry name" value="PH_DOMAIN"/>
    <property type="match status" value="1"/>
</dbReference>
<comment type="function">
    <text evidence="1">Involved in skeletal muscle differentiation. May act as a scaffold protein for AKT1 during muscle differentiation.</text>
</comment>
<comment type="subunit">
    <text evidence="1">Interacts with AKT1.</text>
</comment>
<comment type="subcellular location">
    <subcellularLocation>
        <location evidence="1">Cytoplasm</location>
    </subcellularLocation>
    <subcellularLocation>
        <location evidence="1">Golgi apparatus</location>
    </subcellularLocation>
    <subcellularLocation>
        <location evidence="1">Cell membrane</location>
    </subcellularLocation>
    <text evidence="1">Before differentiation of muscle cells, localized to the Golgi apparatus. During muscle differentiation shuttles to the plasma membrane.</text>
</comment>
<comment type="alternative products">
    <event type="alternative splicing"/>
    <isoform>
        <id>Q6ZWE6-1</id>
        <name>1</name>
        <sequence type="displayed"/>
    </isoform>
    <isoform>
        <id>Q6ZWE6-2</id>
        <name>2</name>
        <sequence type="described" ref="VSP_032513"/>
    </isoform>
    <isoform>
        <id>Q6ZWE6-3</id>
        <name>3</name>
        <sequence type="described" ref="VSP_032511 VSP_032512"/>
    </isoform>
</comment>
<comment type="sequence caution" evidence="5">
    <conflict type="erroneous initiation">
        <sequence resource="EMBL-CDS" id="BAC85557"/>
    </conflict>
</comment>
<feature type="chain" id="PRO_0000326034" description="Pleckstrin homology domain-containing family M member 3">
    <location>
        <begin position="1"/>
        <end position="761"/>
    </location>
</feature>
<feature type="domain" description="PH 1" evidence="2">
    <location>
        <begin position="211"/>
        <end position="308"/>
    </location>
</feature>
<feature type="domain" description="PH 2" evidence="2">
    <location>
        <begin position="361"/>
        <end position="456"/>
    </location>
</feature>
<feature type="zinc finger region" description="Phorbol-ester/DAG-type">
    <location>
        <begin position="669"/>
        <end position="722"/>
    </location>
</feature>
<feature type="modified residue" description="Phosphoserine" evidence="1">
    <location>
        <position position="132"/>
    </location>
</feature>
<feature type="splice variant" id="VSP_032511" description="In isoform 3." evidence="4">
    <original>CQRSIGL</original>
    <variation>MKQIFSL</variation>
    <location>
        <begin position="517"/>
        <end position="523"/>
    </location>
</feature>
<feature type="splice variant" id="VSP_032512" description="In isoform 3." evidence="4">
    <location>
        <begin position="524"/>
        <end position="761"/>
    </location>
</feature>
<feature type="splice variant" id="VSP_032513" description="In isoform 2." evidence="3">
    <original>CESCGAVFHSECKEKSVPCPRCVRRELQKKQKSFWQRLNMDESLEEACTMFELSYQNT</original>
    <variation>FGDPYADLLQGYVA</variation>
    <location>
        <begin position="704"/>
        <end position="761"/>
    </location>
</feature>